<sequence length="672" mass="75546">MKNVAQHDVEKQIAELREQIEKHNYAYYVLDQPSISDAEYDELMRKLMELEEQYPQYKTPDSPSQRVGGAPLEAFRKVTHRVPMLSLSNAFNEGDLRDFDRRVRQEVGDVRYVCELKIDGLAVSLRYEDGYFVQGATRGDGTTGEDITENLKTIRSLPLRLRQQVTIEVRGEAYMPRKSFEKLNEKRKMNGEELFANPRNAAAGSLRQLDPKVAASRQLDIFAYHVVNAEELGILSHSAALNYLDELGFKTNPARQVCETIDDVLSYIEQWHERRASLPYDIDGIVIKVDAFAQQKQLGATAKSPRWAIAYKFPAEEVVTQLVDIELSVGRTGVVTPTAILQPVRVAGTIVQRASLHNEDYIREKDIRLGDYVVIKKAGDIIPEVVCSLPERRTGKEEPFDMPTHCPACASELVRLDDEVALRCVNPQCPAQIREGLIHFVSRQAMNIDGLGEKVIAQLFEHRLVRSVADLYTLTKDELVALERMGEKSATNLLQAIEASKQNSLERLLFGLGIRHVGAKAAKTLAEHFETMERLQQATKEELMAIHEIGEKMADSIVTYFSKEEVKQLLERLRAYGVNMTYKGAKQTIDISSTFAGKTFVLTGTLQSMSRSEAKEKIETLGGKVTGSVSKKTDVVVVGEDAGSKLEKAKQLGITIWDEARFLQEIQQSKQV</sequence>
<keyword id="KW-0227">DNA damage</keyword>
<keyword id="KW-0234">DNA repair</keyword>
<keyword id="KW-0235">DNA replication</keyword>
<keyword id="KW-0436">Ligase</keyword>
<keyword id="KW-0460">Magnesium</keyword>
<keyword id="KW-0464">Manganese</keyword>
<keyword id="KW-0479">Metal-binding</keyword>
<keyword id="KW-0520">NAD</keyword>
<keyword id="KW-0862">Zinc</keyword>
<name>DNLJ_ANOFW</name>
<dbReference type="EC" id="6.5.1.2" evidence="1"/>
<dbReference type="EMBL" id="CP000922">
    <property type="protein sequence ID" value="ACJ32631.1"/>
    <property type="molecule type" value="Genomic_DNA"/>
</dbReference>
<dbReference type="RefSeq" id="WP_012573968.1">
    <property type="nucleotide sequence ID" value="NC_011567.1"/>
</dbReference>
<dbReference type="SMR" id="B7GFV1"/>
<dbReference type="STRING" id="491915.Aflv_0247"/>
<dbReference type="GeneID" id="7036479"/>
<dbReference type="KEGG" id="afl:Aflv_0247"/>
<dbReference type="PATRIC" id="fig|491915.6.peg.252"/>
<dbReference type="eggNOG" id="COG0272">
    <property type="taxonomic scope" value="Bacteria"/>
</dbReference>
<dbReference type="HOGENOM" id="CLU_007764_2_1_9"/>
<dbReference type="Proteomes" id="UP000000742">
    <property type="component" value="Chromosome"/>
</dbReference>
<dbReference type="GO" id="GO:0003677">
    <property type="term" value="F:DNA binding"/>
    <property type="evidence" value="ECO:0007669"/>
    <property type="project" value="InterPro"/>
</dbReference>
<dbReference type="GO" id="GO:0003911">
    <property type="term" value="F:DNA ligase (NAD+) activity"/>
    <property type="evidence" value="ECO:0007669"/>
    <property type="project" value="UniProtKB-UniRule"/>
</dbReference>
<dbReference type="GO" id="GO:0046872">
    <property type="term" value="F:metal ion binding"/>
    <property type="evidence" value="ECO:0007669"/>
    <property type="project" value="UniProtKB-KW"/>
</dbReference>
<dbReference type="GO" id="GO:0006281">
    <property type="term" value="P:DNA repair"/>
    <property type="evidence" value="ECO:0007669"/>
    <property type="project" value="UniProtKB-KW"/>
</dbReference>
<dbReference type="GO" id="GO:0006260">
    <property type="term" value="P:DNA replication"/>
    <property type="evidence" value="ECO:0007669"/>
    <property type="project" value="UniProtKB-KW"/>
</dbReference>
<dbReference type="CDD" id="cd17748">
    <property type="entry name" value="BRCT_DNA_ligase_like"/>
    <property type="match status" value="1"/>
</dbReference>
<dbReference type="CDD" id="cd00114">
    <property type="entry name" value="LIGANc"/>
    <property type="match status" value="1"/>
</dbReference>
<dbReference type="FunFam" id="1.10.150.20:FF:000006">
    <property type="entry name" value="DNA ligase"/>
    <property type="match status" value="1"/>
</dbReference>
<dbReference type="FunFam" id="1.10.150.20:FF:000007">
    <property type="entry name" value="DNA ligase"/>
    <property type="match status" value="1"/>
</dbReference>
<dbReference type="FunFam" id="1.10.287.610:FF:000002">
    <property type="entry name" value="DNA ligase"/>
    <property type="match status" value="1"/>
</dbReference>
<dbReference type="FunFam" id="2.40.50.140:FF:000012">
    <property type="entry name" value="DNA ligase"/>
    <property type="match status" value="1"/>
</dbReference>
<dbReference type="FunFam" id="3.30.470.30:FF:000001">
    <property type="entry name" value="DNA ligase"/>
    <property type="match status" value="1"/>
</dbReference>
<dbReference type="Gene3D" id="6.20.10.30">
    <property type="match status" value="1"/>
</dbReference>
<dbReference type="Gene3D" id="1.10.150.20">
    <property type="entry name" value="5' to 3' exonuclease, C-terminal subdomain"/>
    <property type="match status" value="2"/>
</dbReference>
<dbReference type="Gene3D" id="3.40.50.10190">
    <property type="entry name" value="BRCT domain"/>
    <property type="match status" value="1"/>
</dbReference>
<dbReference type="Gene3D" id="3.30.470.30">
    <property type="entry name" value="DNA ligase/mRNA capping enzyme"/>
    <property type="match status" value="1"/>
</dbReference>
<dbReference type="Gene3D" id="1.10.287.610">
    <property type="entry name" value="Helix hairpin bin"/>
    <property type="match status" value="1"/>
</dbReference>
<dbReference type="Gene3D" id="2.40.50.140">
    <property type="entry name" value="Nucleic acid-binding proteins"/>
    <property type="match status" value="1"/>
</dbReference>
<dbReference type="HAMAP" id="MF_01588">
    <property type="entry name" value="DNA_ligase_A"/>
    <property type="match status" value="1"/>
</dbReference>
<dbReference type="InterPro" id="IPR001357">
    <property type="entry name" value="BRCT_dom"/>
</dbReference>
<dbReference type="InterPro" id="IPR036420">
    <property type="entry name" value="BRCT_dom_sf"/>
</dbReference>
<dbReference type="InterPro" id="IPR041663">
    <property type="entry name" value="DisA/LigA_HHH"/>
</dbReference>
<dbReference type="InterPro" id="IPR001679">
    <property type="entry name" value="DNA_ligase"/>
</dbReference>
<dbReference type="InterPro" id="IPR018239">
    <property type="entry name" value="DNA_ligase_AS"/>
</dbReference>
<dbReference type="InterPro" id="IPR033136">
    <property type="entry name" value="DNA_ligase_CS"/>
</dbReference>
<dbReference type="InterPro" id="IPR013839">
    <property type="entry name" value="DNAligase_adenylation"/>
</dbReference>
<dbReference type="InterPro" id="IPR013840">
    <property type="entry name" value="DNAligase_N"/>
</dbReference>
<dbReference type="InterPro" id="IPR003583">
    <property type="entry name" value="Hlx-hairpin-Hlx_DNA-bd_motif"/>
</dbReference>
<dbReference type="InterPro" id="IPR012340">
    <property type="entry name" value="NA-bd_OB-fold"/>
</dbReference>
<dbReference type="InterPro" id="IPR004150">
    <property type="entry name" value="NAD_DNA_ligase_OB"/>
</dbReference>
<dbReference type="InterPro" id="IPR010994">
    <property type="entry name" value="RuvA_2-like"/>
</dbReference>
<dbReference type="InterPro" id="IPR004149">
    <property type="entry name" value="Znf_DNAligase_C4"/>
</dbReference>
<dbReference type="NCBIfam" id="TIGR00575">
    <property type="entry name" value="dnlj"/>
    <property type="match status" value="1"/>
</dbReference>
<dbReference type="NCBIfam" id="NF005932">
    <property type="entry name" value="PRK07956.1"/>
    <property type="match status" value="1"/>
</dbReference>
<dbReference type="PANTHER" id="PTHR23389">
    <property type="entry name" value="CHROMOSOME TRANSMISSION FIDELITY FACTOR 18"/>
    <property type="match status" value="1"/>
</dbReference>
<dbReference type="PANTHER" id="PTHR23389:SF6">
    <property type="entry name" value="REPLICATION FACTOR C SUBUNIT 1"/>
    <property type="match status" value="1"/>
</dbReference>
<dbReference type="Pfam" id="PF00533">
    <property type="entry name" value="BRCT"/>
    <property type="match status" value="1"/>
</dbReference>
<dbReference type="Pfam" id="PF01653">
    <property type="entry name" value="DNA_ligase_aden"/>
    <property type="match status" value="1"/>
</dbReference>
<dbReference type="Pfam" id="PF03120">
    <property type="entry name" value="DNA_ligase_OB"/>
    <property type="match status" value="1"/>
</dbReference>
<dbReference type="Pfam" id="PF03119">
    <property type="entry name" value="DNA_ligase_ZBD"/>
    <property type="match status" value="1"/>
</dbReference>
<dbReference type="Pfam" id="PF12826">
    <property type="entry name" value="HHH_2"/>
    <property type="match status" value="1"/>
</dbReference>
<dbReference type="Pfam" id="PF14520">
    <property type="entry name" value="HHH_5"/>
    <property type="match status" value="1"/>
</dbReference>
<dbReference type="Pfam" id="PF22745">
    <property type="entry name" value="Nlig-Ia"/>
    <property type="match status" value="1"/>
</dbReference>
<dbReference type="PIRSF" id="PIRSF001604">
    <property type="entry name" value="LigA"/>
    <property type="match status" value="1"/>
</dbReference>
<dbReference type="SMART" id="SM00292">
    <property type="entry name" value="BRCT"/>
    <property type="match status" value="1"/>
</dbReference>
<dbReference type="SMART" id="SM00278">
    <property type="entry name" value="HhH1"/>
    <property type="match status" value="3"/>
</dbReference>
<dbReference type="SMART" id="SM00532">
    <property type="entry name" value="LIGANc"/>
    <property type="match status" value="1"/>
</dbReference>
<dbReference type="SUPFAM" id="SSF52113">
    <property type="entry name" value="BRCT domain"/>
    <property type="match status" value="1"/>
</dbReference>
<dbReference type="SUPFAM" id="SSF56091">
    <property type="entry name" value="DNA ligase/mRNA capping enzyme, catalytic domain"/>
    <property type="match status" value="1"/>
</dbReference>
<dbReference type="SUPFAM" id="SSF50249">
    <property type="entry name" value="Nucleic acid-binding proteins"/>
    <property type="match status" value="1"/>
</dbReference>
<dbReference type="SUPFAM" id="SSF47781">
    <property type="entry name" value="RuvA domain 2-like"/>
    <property type="match status" value="1"/>
</dbReference>
<dbReference type="PROSITE" id="PS50172">
    <property type="entry name" value="BRCT"/>
    <property type="match status" value="1"/>
</dbReference>
<dbReference type="PROSITE" id="PS01055">
    <property type="entry name" value="DNA_LIGASE_N1"/>
    <property type="match status" value="1"/>
</dbReference>
<dbReference type="PROSITE" id="PS01056">
    <property type="entry name" value="DNA_LIGASE_N2"/>
    <property type="match status" value="1"/>
</dbReference>
<comment type="function">
    <text evidence="1">DNA ligase that catalyzes the formation of phosphodiester linkages between 5'-phosphoryl and 3'-hydroxyl groups in double-stranded DNA using NAD as a coenzyme and as the energy source for the reaction. It is essential for DNA replication and repair of damaged DNA.</text>
</comment>
<comment type="catalytic activity">
    <reaction evidence="1">
        <text>NAD(+) + (deoxyribonucleotide)n-3'-hydroxyl + 5'-phospho-(deoxyribonucleotide)m = (deoxyribonucleotide)n+m + AMP + beta-nicotinamide D-nucleotide.</text>
        <dbReference type="EC" id="6.5.1.2"/>
    </reaction>
</comment>
<comment type="cofactor">
    <cofactor evidence="1">
        <name>Mg(2+)</name>
        <dbReference type="ChEBI" id="CHEBI:18420"/>
    </cofactor>
    <cofactor evidence="1">
        <name>Mn(2+)</name>
        <dbReference type="ChEBI" id="CHEBI:29035"/>
    </cofactor>
</comment>
<comment type="similarity">
    <text evidence="1">Belongs to the NAD-dependent DNA ligase family. LigA subfamily.</text>
</comment>
<gene>
    <name evidence="1" type="primary">ligA</name>
    <name type="ordered locus">Aflv_0247</name>
</gene>
<organism>
    <name type="scientific">Anoxybacillus flavithermus (strain DSM 21510 / WK1)</name>
    <dbReference type="NCBI Taxonomy" id="491915"/>
    <lineage>
        <taxon>Bacteria</taxon>
        <taxon>Bacillati</taxon>
        <taxon>Bacillota</taxon>
        <taxon>Bacilli</taxon>
        <taxon>Bacillales</taxon>
        <taxon>Anoxybacillaceae</taxon>
        <taxon>Anoxybacillus</taxon>
    </lineage>
</organism>
<protein>
    <recommendedName>
        <fullName evidence="1">DNA ligase</fullName>
        <ecNumber evidence="1">6.5.1.2</ecNumber>
    </recommendedName>
    <alternativeName>
        <fullName evidence="1">Polydeoxyribonucleotide synthase [NAD(+)]</fullName>
    </alternativeName>
</protein>
<feature type="chain" id="PRO_0000380292" description="DNA ligase">
    <location>
        <begin position="1"/>
        <end position="672"/>
    </location>
</feature>
<feature type="domain" description="BRCT" evidence="1">
    <location>
        <begin position="590"/>
        <end position="672"/>
    </location>
</feature>
<feature type="active site" description="N6-AMP-lysine intermediate" evidence="1">
    <location>
        <position position="117"/>
    </location>
</feature>
<feature type="binding site" evidence="1">
    <location>
        <begin position="37"/>
        <end position="41"/>
    </location>
    <ligand>
        <name>NAD(+)</name>
        <dbReference type="ChEBI" id="CHEBI:57540"/>
    </ligand>
</feature>
<feature type="binding site" evidence="1">
    <location>
        <begin position="86"/>
        <end position="87"/>
    </location>
    <ligand>
        <name>NAD(+)</name>
        <dbReference type="ChEBI" id="CHEBI:57540"/>
    </ligand>
</feature>
<feature type="binding site" evidence="1">
    <location>
        <position position="115"/>
    </location>
    <ligand>
        <name>NAD(+)</name>
        <dbReference type="ChEBI" id="CHEBI:57540"/>
    </ligand>
</feature>
<feature type="binding site" evidence="1">
    <location>
        <position position="138"/>
    </location>
    <ligand>
        <name>NAD(+)</name>
        <dbReference type="ChEBI" id="CHEBI:57540"/>
    </ligand>
</feature>
<feature type="binding site" evidence="1">
    <location>
        <position position="172"/>
    </location>
    <ligand>
        <name>NAD(+)</name>
        <dbReference type="ChEBI" id="CHEBI:57540"/>
    </ligand>
</feature>
<feature type="binding site" evidence="1">
    <location>
        <position position="288"/>
    </location>
    <ligand>
        <name>NAD(+)</name>
        <dbReference type="ChEBI" id="CHEBI:57540"/>
    </ligand>
</feature>
<feature type="binding site" evidence="1">
    <location>
        <position position="312"/>
    </location>
    <ligand>
        <name>NAD(+)</name>
        <dbReference type="ChEBI" id="CHEBI:57540"/>
    </ligand>
</feature>
<feature type="binding site" evidence="1">
    <location>
        <position position="406"/>
    </location>
    <ligand>
        <name>Zn(2+)</name>
        <dbReference type="ChEBI" id="CHEBI:29105"/>
    </ligand>
</feature>
<feature type="binding site" evidence="1">
    <location>
        <position position="409"/>
    </location>
    <ligand>
        <name>Zn(2+)</name>
        <dbReference type="ChEBI" id="CHEBI:29105"/>
    </ligand>
</feature>
<feature type="binding site" evidence="1">
    <location>
        <position position="424"/>
    </location>
    <ligand>
        <name>Zn(2+)</name>
        <dbReference type="ChEBI" id="CHEBI:29105"/>
    </ligand>
</feature>
<feature type="binding site" evidence="1">
    <location>
        <position position="429"/>
    </location>
    <ligand>
        <name>Zn(2+)</name>
        <dbReference type="ChEBI" id="CHEBI:29105"/>
    </ligand>
</feature>
<reference key="1">
    <citation type="journal article" date="2008" name="Genome Biol.">
        <title>Encapsulated in silica: genome, proteome and physiology of the thermophilic bacterium Anoxybacillus flavithermus WK1.</title>
        <authorList>
            <person name="Saw J.H."/>
            <person name="Mountain B.W."/>
            <person name="Feng L."/>
            <person name="Omelchenko M.V."/>
            <person name="Hou S."/>
            <person name="Saito J.A."/>
            <person name="Stott M.B."/>
            <person name="Li D."/>
            <person name="Zhao G."/>
            <person name="Wu J."/>
            <person name="Galperin M.Y."/>
            <person name="Koonin E.V."/>
            <person name="Makarova K.S."/>
            <person name="Wolf Y.I."/>
            <person name="Rigden D.J."/>
            <person name="Dunfield P.F."/>
            <person name="Wang L."/>
            <person name="Alam M."/>
        </authorList>
    </citation>
    <scope>NUCLEOTIDE SEQUENCE [LARGE SCALE GENOMIC DNA]</scope>
    <source>
        <strain>DSM 21510 / WK1</strain>
    </source>
</reference>
<evidence type="ECO:0000255" key="1">
    <source>
        <dbReference type="HAMAP-Rule" id="MF_01588"/>
    </source>
</evidence>
<accession>B7GFV1</accession>
<proteinExistence type="inferred from homology"/>